<dbReference type="EMBL" id="X53134">
    <property type="protein sequence ID" value="CAA37294.1"/>
    <property type="molecule type" value="Genomic_RNA"/>
</dbReference>
<dbReference type="BMRB" id="P27957"/>
<dbReference type="SMR" id="P27957"/>
<dbReference type="euHCVdb" id="X53134"/>
<dbReference type="GO" id="GO:0044167">
    <property type="term" value="C:host cell endoplasmic reticulum membrane"/>
    <property type="evidence" value="ECO:0007669"/>
    <property type="project" value="UniProtKB-SubCell"/>
</dbReference>
<dbReference type="GO" id="GO:0044186">
    <property type="term" value="C:host cell lipid droplet"/>
    <property type="evidence" value="ECO:0007669"/>
    <property type="project" value="UniProtKB-SubCell"/>
</dbReference>
<dbReference type="GO" id="GO:0044191">
    <property type="term" value="C:host cell mitochondrial membrane"/>
    <property type="evidence" value="ECO:0007669"/>
    <property type="project" value="UniProtKB-SubCell"/>
</dbReference>
<dbReference type="GO" id="GO:0042025">
    <property type="term" value="C:host cell nucleus"/>
    <property type="evidence" value="ECO:0007669"/>
    <property type="project" value="UniProtKB-SubCell"/>
</dbReference>
<dbReference type="GO" id="GO:0016020">
    <property type="term" value="C:membrane"/>
    <property type="evidence" value="ECO:0007669"/>
    <property type="project" value="UniProtKB-KW"/>
</dbReference>
<dbReference type="GO" id="GO:1990904">
    <property type="term" value="C:ribonucleoprotein complex"/>
    <property type="evidence" value="ECO:0007669"/>
    <property type="project" value="UniProtKB-KW"/>
</dbReference>
<dbReference type="GO" id="GO:0019031">
    <property type="term" value="C:viral envelope"/>
    <property type="evidence" value="ECO:0007669"/>
    <property type="project" value="UniProtKB-KW"/>
</dbReference>
<dbReference type="GO" id="GO:0019013">
    <property type="term" value="C:viral nucleocapsid"/>
    <property type="evidence" value="ECO:0007669"/>
    <property type="project" value="UniProtKB-KW"/>
</dbReference>
<dbReference type="GO" id="GO:0055036">
    <property type="term" value="C:virion membrane"/>
    <property type="evidence" value="ECO:0007669"/>
    <property type="project" value="UniProtKB-SubCell"/>
</dbReference>
<dbReference type="GO" id="GO:0003723">
    <property type="term" value="F:RNA binding"/>
    <property type="evidence" value="ECO:0007669"/>
    <property type="project" value="UniProtKB-KW"/>
</dbReference>
<dbReference type="GO" id="GO:0005198">
    <property type="term" value="F:structural molecule activity"/>
    <property type="evidence" value="ECO:0007669"/>
    <property type="project" value="InterPro"/>
</dbReference>
<dbReference type="GO" id="GO:0075512">
    <property type="term" value="P:clathrin-dependent endocytosis of virus by host cell"/>
    <property type="evidence" value="ECO:0007669"/>
    <property type="project" value="UniProtKB-KW"/>
</dbReference>
<dbReference type="GO" id="GO:0039654">
    <property type="term" value="P:fusion of virus membrane with host endosome membrane"/>
    <property type="evidence" value="ECO:0007669"/>
    <property type="project" value="UniProtKB-KW"/>
</dbReference>
<dbReference type="GO" id="GO:0052170">
    <property type="term" value="P:symbiont-mediated suppression of host innate immune response"/>
    <property type="evidence" value="ECO:0007669"/>
    <property type="project" value="UniProtKB-KW"/>
</dbReference>
<dbReference type="GO" id="GO:0019062">
    <property type="term" value="P:virion attachment to host cell"/>
    <property type="evidence" value="ECO:0007669"/>
    <property type="project" value="UniProtKB-KW"/>
</dbReference>
<dbReference type="FunFam" id="3.30.160.890:FF:000001">
    <property type="entry name" value="Genome polyprotein"/>
    <property type="match status" value="1"/>
</dbReference>
<dbReference type="Gene3D" id="3.30.160.890">
    <property type="entry name" value="Hepatitis C virus envelope glycoprotein E1, chain C"/>
    <property type="match status" value="1"/>
</dbReference>
<dbReference type="InterPro" id="IPR002521">
    <property type="entry name" value="HCV_Core_C"/>
</dbReference>
<dbReference type="InterPro" id="IPR002519">
    <property type="entry name" value="HCV_Env"/>
</dbReference>
<dbReference type="InterPro" id="IPR002531">
    <property type="entry name" value="HCV_NS1"/>
</dbReference>
<dbReference type="Pfam" id="PF01542">
    <property type="entry name" value="HCV_core"/>
    <property type="match status" value="1"/>
</dbReference>
<dbReference type="Pfam" id="PF01539">
    <property type="entry name" value="HCV_env"/>
    <property type="match status" value="1"/>
</dbReference>
<dbReference type="Pfam" id="PF01560">
    <property type="entry name" value="HCV_NS1"/>
    <property type="match status" value="1"/>
</dbReference>
<organismHost>
    <name type="scientific">Homo sapiens</name>
    <name type="common">Human</name>
    <dbReference type="NCBI Taxonomy" id="9606"/>
</organismHost>
<organism>
    <name type="scientific">Hepatitis C virus (isolate TH)</name>
    <name type="common">HCV</name>
    <dbReference type="NCBI Taxonomy" id="11117"/>
    <lineage>
        <taxon>Viruses</taxon>
        <taxon>Riboviria</taxon>
        <taxon>Orthornavirae</taxon>
        <taxon>Kitrinoviricota</taxon>
        <taxon>Flasuviricetes</taxon>
        <taxon>Amarillovirales</taxon>
        <taxon>Flaviviridae</taxon>
        <taxon>Hepacivirus</taxon>
        <taxon>Hepacivirus hominis</taxon>
    </lineage>
</organism>
<proteinExistence type="inferred from homology"/>
<name>POLG_HCVTH</name>
<evidence type="ECO:0000250" key="1">
    <source>
        <dbReference type="UniProtKB" id="P26662"/>
    </source>
</evidence>
<evidence type="ECO:0000250" key="2">
    <source>
        <dbReference type="UniProtKB" id="P26663"/>
    </source>
</evidence>
<evidence type="ECO:0000250" key="3">
    <source>
        <dbReference type="UniProtKB" id="P26664"/>
    </source>
</evidence>
<evidence type="ECO:0000250" key="4">
    <source>
        <dbReference type="UniProtKB" id="P27958"/>
    </source>
</evidence>
<evidence type="ECO:0000250" key="5">
    <source>
        <dbReference type="UniProtKB" id="P29846"/>
    </source>
</evidence>
<evidence type="ECO:0000250" key="6">
    <source>
        <dbReference type="UniProtKB" id="Q01403"/>
    </source>
</evidence>
<evidence type="ECO:0000250" key="7">
    <source>
        <dbReference type="UniProtKB" id="Q03463"/>
    </source>
</evidence>
<evidence type="ECO:0000250" key="8">
    <source>
        <dbReference type="UniProtKB" id="Q5EG65"/>
    </source>
</evidence>
<evidence type="ECO:0000250" key="9">
    <source>
        <dbReference type="UniProtKB" id="Q99IB8"/>
    </source>
</evidence>
<evidence type="ECO:0000250" key="10">
    <source>
        <dbReference type="UniProtKB" id="Q9WMX2"/>
    </source>
</evidence>
<evidence type="ECO:0000255" key="11"/>
<evidence type="ECO:0000305" key="12"/>
<accession>P27957</accession>
<keyword id="KW-0053">Apoptosis</keyword>
<keyword id="KW-0167">Capsid protein</keyword>
<keyword id="KW-1165">Clathrin-mediated endocytosis of virus by host</keyword>
<keyword id="KW-1170">Fusion of virus membrane with host endosomal membrane</keyword>
<keyword id="KW-1168">Fusion of virus membrane with host membrane</keyword>
<keyword id="KW-0325">Glycoprotein</keyword>
<keyword id="KW-1035">Host cytoplasm</keyword>
<keyword id="KW-1038">Host endoplasmic reticulum</keyword>
<keyword id="KW-1041">Host lipid droplet</keyword>
<keyword id="KW-1043">Host membrane</keyword>
<keyword id="KW-1045">Host mitochondrion</keyword>
<keyword id="KW-1048">Host nucleus</keyword>
<keyword id="KW-0945">Host-virus interaction</keyword>
<keyword id="KW-1090">Inhibition of host innate immune response by virus</keyword>
<keyword id="KW-0922">Interferon antiviral system evasion</keyword>
<keyword id="KW-0472">Membrane</keyword>
<keyword id="KW-0553">Oncogene</keyword>
<keyword id="KW-0687">Ribonucleoprotein</keyword>
<keyword id="KW-0694">RNA-binding</keyword>
<keyword id="KW-0812">Transmembrane</keyword>
<keyword id="KW-1133">Transmembrane helix</keyword>
<keyword id="KW-0832">Ubl conjugation</keyword>
<keyword id="KW-1161">Viral attachment to host cell</keyword>
<keyword id="KW-0261">Viral envelope protein</keyword>
<keyword id="KW-0899">Viral immunoevasion</keyword>
<keyword id="KW-0543">Viral nucleoprotein</keyword>
<keyword id="KW-1162">Viral penetration into host cytoplasm</keyword>
<keyword id="KW-0946">Virion</keyword>
<keyword id="KW-1164">Virus endocytosis by host</keyword>
<keyword id="KW-1160">Virus entry into host cell</keyword>
<feature type="chain" id="PRO_0000450926" description="Genome polyprotein">
    <location>
        <begin position="1" status="less than"/>
        <end position="321" status="greater than"/>
    </location>
</feature>
<feature type="chain" id="PRO_0000037661" description="Core protein precursor">
    <location>
        <begin position="1" status="less than"/>
        <end position="75"/>
    </location>
</feature>
<feature type="chain" id="PRO_0000284103" description="Mature core protein">
    <location>
        <begin position="1" status="less than"/>
        <end position="61"/>
    </location>
</feature>
<feature type="propeptide" id="PRO_0000037663" description="ER anchor for the core protein, removed in mature form by host signal peptidase">
    <location>
        <begin position="62"/>
        <end position="75"/>
    </location>
</feature>
<feature type="chain" id="PRO_0000037664" description="Envelope glycoprotein E1">
    <location>
        <begin position="76"/>
        <end position="267"/>
    </location>
</feature>
<feature type="chain" id="PRO_0000037665" description="Envelope glycoprotein E2">
    <location>
        <begin position="268"/>
        <end position="321" status="greater than"/>
    </location>
</feature>
<feature type="topological domain" description="Cytoplasmic" evidence="11">
    <location>
        <begin position="1" status="less than"/>
        <end position="52"/>
    </location>
</feature>
<feature type="transmembrane region" description="Helical" evidence="11">
    <location>
        <begin position="53"/>
        <end position="73"/>
    </location>
</feature>
<feature type="topological domain" description="Lumenal" evidence="11">
    <location>
        <begin position="74"/>
        <end position="242"/>
    </location>
</feature>
<feature type="transmembrane region" description="Helical" evidence="4">
    <location>
        <begin position="243"/>
        <end position="263"/>
    </location>
</feature>
<feature type="topological domain" description="Lumenal" evidence="4">
    <location>
        <begin position="264"/>
        <end position="321" status="greater than"/>
    </location>
</feature>
<feature type="region of interest" description="Interaction with APOA2" evidence="5">
    <location>
        <begin position="6"/>
        <end position="57"/>
    </location>
</feature>
<feature type="region of interest" description="Important for lipid droplets localization" evidence="4">
    <location>
        <begin position="48"/>
        <end position="51"/>
    </location>
</feature>
<feature type="region of interest" description="Important for fusion" evidence="4">
    <location>
        <begin position="149"/>
        <end position="180"/>
    </location>
</feature>
<feature type="region of interest" description="HVR1" evidence="4">
    <location>
        <begin position="268"/>
        <end position="294"/>
    </location>
</feature>
<feature type="site" description="Cleavage; by host signal peptide peptidase" evidence="1">
    <location>
        <begin position="61"/>
        <end position="62"/>
    </location>
</feature>
<feature type="site" description="Cleavage; by host signal peptidase" evidence="1">
    <location>
        <begin position="75"/>
        <end position="76"/>
    </location>
</feature>
<feature type="site" description="Cleavage; by host signal peptidase" evidence="1">
    <location>
        <begin position="267"/>
        <end position="268"/>
    </location>
</feature>
<feature type="glycosylation site" description="N-linked (GlcNAc...) asparagine; by host" evidence="4">
    <location>
        <position position="80"/>
    </location>
</feature>
<feature type="glycosylation site" description="N-linked (GlcNAc...) asparagine; by host" evidence="4">
    <location>
        <position position="93"/>
    </location>
</feature>
<feature type="glycosylation site" description="N-linked (GlcNAc...) asparagine; by host" evidence="4">
    <location>
        <position position="118"/>
    </location>
</feature>
<feature type="glycosylation site" description="N-linked (GlcNAc...) asparagine; by host" evidence="11">
    <location>
        <position position="189"/>
    </location>
</feature>
<feature type="glycosylation site" description="N-linked (GlcNAc...) (high mannose) asparagine; by host" evidence="4">
    <location>
        <position position="301"/>
    </location>
</feature>
<feature type="glycosylation site" description="N-linked (GlcNAc...) (high mannose) asparagine; by host" evidence="4">
    <location>
        <position position="307"/>
    </location>
</feature>
<feature type="glycosylation site" description="N-linked (GlcNAc...) (high mannose) asparagine; by host" evidence="4">
    <location>
        <position position="314"/>
    </location>
</feature>
<feature type="non-terminal residue">
    <location>
        <position position="1"/>
    </location>
</feature>
<feature type="non-terminal residue">
    <location>
        <position position="321"/>
    </location>
</feature>
<reference key="1">
    <citation type="journal article" date="1991" name="Virology">
        <title>Variable and hypervariable domains are found in the regions of HCV corresponding to the flavivirus envelope and NS1 proteins and the pestivirus envelope glycoproteins.</title>
        <authorList>
            <person name="Weiner A.J."/>
            <person name="Brauer M.J."/>
            <person name="Rosenblatt J."/>
            <person name="Richman K.H."/>
            <person name="Tung J."/>
            <person name="Crawford K."/>
            <person name="Bonino F."/>
            <person name="Saracco G."/>
            <person name="Choo Q.-L."/>
            <person name="Houghton M."/>
            <person name="Han J.H."/>
        </authorList>
    </citation>
    <scope>NUCLEOTIDE SEQUENCE [GENOMIC RNA]</scope>
</reference>
<reference key="2">
    <citation type="journal article" date="2000" name="J. Viral Hepat.">
        <title>Properties of the hepatitis C virus core protein: a structural protein that modulates cellular processes.</title>
        <authorList>
            <person name="McLauchlan J."/>
        </authorList>
    </citation>
    <scope>REVIEW</scope>
</reference>
<reference key="3">
    <citation type="journal article" date="2004" name="Hepatology">
        <title>Structural biology of hepatitis C virus.</title>
        <authorList>
            <person name="Penin F."/>
            <person name="Dubuisson J."/>
            <person name="Rey F.A."/>
            <person name="Moradpour D."/>
            <person name="Pawlotsky J.-M."/>
        </authorList>
    </citation>
    <scope>REVIEW</scope>
</reference>
<protein>
    <recommendedName>
        <fullName>Genome polyprotein</fullName>
    </recommendedName>
    <component>
        <recommendedName>
            <fullName>Core protein precursor</fullName>
        </recommendedName>
        <alternativeName>
            <fullName>Capsid protein C</fullName>
        </alternativeName>
        <alternativeName>
            <fullName>p23</fullName>
        </alternativeName>
    </component>
    <component>
        <recommendedName>
            <fullName>Mature core protein</fullName>
        </recommendedName>
        <alternativeName>
            <fullName>p21</fullName>
        </alternativeName>
    </component>
    <component>
        <recommendedName>
            <fullName>Envelope glycoprotein E1</fullName>
        </recommendedName>
        <alternativeName>
            <fullName>gp32</fullName>
        </alternativeName>
        <alternativeName>
            <fullName>gp35</fullName>
        </alternativeName>
    </component>
    <component>
        <recommendedName>
            <fullName>Envelope glycoprotein E2</fullName>
        </recommendedName>
        <alternativeName>
            <fullName>NS1</fullName>
        </alternativeName>
        <alternativeName>
            <fullName>gp68</fullName>
        </alternativeName>
        <alternativeName>
            <fullName>gp70</fullName>
        </alternativeName>
    </component>
</protein>
<comment type="function">
    <molecule>Mature core protein</molecule>
    <text evidence="1 3 4 5 9 12">Packages viral RNA to form a viral nucleocapsid, and promotes virion budding (Probable). Participates in the viral particle production as a result of its interaction with the non-structural protein 5A (By similarity). Binds RNA and may function as a RNA chaperone to induce the RNA structural rearrangements taking place during virus replication (By similarity). Modulates viral translation initiation by interacting with viral IRES and 40S ribosomal subunit (By similarity). Affects various cell signaling pathways, host immunity and lipid metabolism (Probable). Prevents the establishment of cellular antiviral state by blocking the interferon-alpha/beta (IFN-alpha/beta) and IFN-gamma signaling pathways and by blocking the formation of phosphorylated STAT1 and promoting ubiquitin-mediated proteasome-dependent degradation of STAT1 (By similarity). Activates STAT3 leading to cellular transformation (By similarity). Regulates the activity of cellular genes, including c-myc and c-fos (By similarity). May repress the promoter of p53, and sequester CREB3 and SP110 isoform 3/Sp110b in the cytoplasm (By similarity). Represses cell cycle negative regulating factor CDKN1A, thereby interrupting an important check point of normal cell cycle regulation (By similarity). Targets transcription factors involved in the regulation of inflammatory responses and in the immune response: suppresses TNF-induced NF-kappa-B activation, and activates AP-1 (By similarity). Binds to dendritic cells (DCs) via C1QR1, resulting in down-regulation of T-lymphocytes proliferation (By similarity). Alters lipid metabolism by interacting with hepatocellular proteins involved in lipid accumulation and storage (By similarity). Induces up-regulation of FAS promoter activity, and thereby contributes to the increased triglyceride accumulation in hepatocytes (steatosis) (By similarity).</text>
</comment>
<comment type="function">
    <molecule>Envelope glycoprotein E1</molecule>
    <text evidence="4">Forms a heterodimer with envelope glycoprotein E2, which mediates virus attachment to the host cell, virion internalization through clathrin-dependent endocytosis and fusion with host membrane (By similarity). Fusion with the host cell is most likely mediated by both E1 and E2, through conformational rearrangements of the heterodimer required for fusion rather than a classical class II fusion mechanism (By similarity). E1/E2 heterodimer binds host apolipoproteins such as APOB and ApoE thereby forming a lipo-viro-particle (LVP) (By similarity). APOE associated to the LVP allows the initial virus attachment to cell surface receptors such as the heparan sulfate proteoglycans (HSPGs), syndecan-1 (SDC1), syndecan-1 (SDC2), the low-density lipoprotein receptor (LDLR) and scavenger receptor class B type I (SCARB1) (By similarity). The cholesterol transfer activity of SCARB1 allows E2 exposure and binding of E2 to SCARB1 and the tetraspanin CD81 (By similarity). E1/E2 heterodimer binding on CD81 activates the epithelial growth factor receptor (EGFR) signaling pathway (By similarity). Diffusion of the complex E1-E2-EGFR-SCARB1-CD81 to the cell lateral membrane allows further interaction with Claudin 1 (CLDN1) and occludin (OCLN) to finally trigger HCV entry (By similarity).</text>
</comment>
<comment type="function">
    <molecule>Envelope glycoprotein E2</molecule>
    <text evidence="3 4">Forms a heterodimer with envelope glycoprotein E1, which mediates virus attachment to the host cell, virion internalization through clathrin-dependent endocytosis and fusion with host membrane (By similarity). Fusion with the host cell is most likely mediated by both E1 and E2, through conformational rearrangements of the heterodimer required for fusion rather than a classical class II fusion mechanism (By similarity). The interaction between envelope glycoprotein E2 and host apolipoprotein E/APOE allows the proper assembly, maturation and infectivity of the viral particles (By similarity). This interaction is probably promoted via the up-regulation of cellular autophagy by the virus (By similarity). E1/E2 heterodimer binds host apolipoproteins such as APOB and APOE thereby forming a lipo-viro-particle (LVP) (By similarity). APOE associated to the LVP allows the initial virus attachment to cell surface receptors such as the heparan sulfate proteoglycans (HSPGs), syndecan-1 (SDC1), syndecan-1 (SDC2), the low-density lipoprotein receptor (LDLR) and scavenger receptor class B type I (SCARB1) (By similarity). The cholesterol transfer activity of SCARB1 allows E2 exposure and binding of E2 to SCARB1 and the tetraspanin CD81 (By similarity). E1/E2 heterodimer binding on CD81 activates the epithelial growth factor receptor (EGFR) signaling pathway (By similarity). Diffusion of the complex E1-E2-EGFR-SCARB1-CD81 to the cell lateral membrane allows further interaction with Claudin 1 (CLDN1) and occludin (OCLN) to finally trigger HCV entry (By similarity). Inhibits host EIF2AK2/PKR activation, preventing the establishment of an antiviral state (By similarity). Viral ligand for CD209/DC-SIGN and CLEC4M/DC-SIGNR, which are respectively found on dendritic cells (DCs), and on liver sinusoidal endothelial cells and macrophage-like cells of lymph node sinuses (By similarity). These interactions allow the capture of circulating HCV particles by these cells and subsequent facilitated transmission to permissive cells such as hepatocytes and lymphocyte subpopulations (By similarity).</text>
</comment>
<comment type="subunit">
    <molecule>Mature core protein</molecule>
    <text evidence="1 3 4 5 7 8 9">Homooligomer (By similarity). Interacts with E1 (via C-terminus) (By similarity). Interacts with the non-structural protein 5A (By similarity). Interacts (via N-terminus) with host STAT1 (via SH2 domain); this interaction results in decreased STAT1 phosphorylation and ubiquitin-mediated proteasome-dependent STAT1 degradation, leading to decreased IFN-stimulated gene transcription (By similarity). Interacts with host STAT3; this interaction constitutively activates STAT3 (By similarity). Interacts with host LTBR receptor (By similarity). Interacts with host TNFRSF1A receptor and possibly induces apoptosis (By similarity). Interacts with host HNRPK (By similarity). Interacts with host YWHAE (By similarity). Interacts with host UBE3A/E6AP (By similarity). Interacts with host DDX3X (By similarity). Interacts with host APOA2 (By similarity). Interacts with host RXRA protein (By similarity). Interacts with host SP110 isoform 3/Sp110b; this interaction sequesters the transcriptional corepressor SP110 away from the nucleus (By similarity). Interacts with host CREB3 nuclear transcription protein; this interaction triggers cell transformation (By similarity). Interacts with host ACY3 (By similarity). Interacts with host C1QR1 (By similarity). Interacts with host RBM24; this interaction, which enhances the interaction of the mature core protein with 5'-UTR, may inhibit viral translation and favor replication (By similarity). Interacts with host EIF2AK2/PKR; this interaction induces the autophosphorylation of EIF2AK2 (By similarity). Part of the viral assembly initiation complex composed of NS2, E1, E2, NS3, NS4A, NS5A and the mature core protein (By similarity).</text>
</comment>
<comment type="subunit">
    <molecule>Envelope glycoprotein E1</molecule>
    <text evidence="4 9">Forms a heterodimer with envelope glycoprotein E2 (By similarity). Interacts with mature core protein (By similarity). Interacts with protease NS2 (By similarity). The heterodimer E1/E2 interacts with host CLDN1; this interaction plays a role in viral entry into host cell (By similarity). Interacts with host SPSB2 (via C-terminus) (By similarity). Part of the viral assembly initiation complex composed of NS2, E1, E2, NS3, NS4A, NS5A and the mature core protein (By similarity).</text>
</comment>
<comment type="subunit">
    <molecule>Envelope glycoprotein E2</molecule>
    <text evidence="4 9">Forms a heterodimer with envelope glycoprotein E1 (By similarity). Interacts with host CD81 and SCARB1 receptors; these interactions play a role in viral entry into host cell (By similarity). Interacts with host EIF2AK2/PKR; this interaction inhibits EIF2AK2 and probably allows the virus to evade the innate immune response (By similarity). Interacts with host CD209/DC-SIGN and CLEC4M/DC-SIGNR (By similarity). Interact with host SPCS1; this interaction is essential for viral particle assembly (By similarity). Interacts with protease NS2 (By similarity). The heterodimer E1/E2 interacts with host CLDN1; this interaction plays a role in viral entry into host cell (By similarity). Part of the viral assembly initiation complex composed of NS2, E1, E2, NS3, NS4A, NS5A and the mature core protein (By similarity).</text>
</comment>
<comment type="subcellular location">
    <molecule>Core protein precursor</molecule>
    <subcellularLocation>
        <location evidence="3">Host endoplasmic reticulum membrane</location>
        <topology evidence="11">Single-pass membrane protein</topology>
    </subcellularLocation>
    <subcellularLocation>
        <location evidence="3">Host mitochondrion membrane</location>
        <topology evidence="11">Single-pass type I membrane protein</topology>
    </subcellularLocation>
    <text>The C-terminal transmembrane domain of the core protein precursor contains an ER signal leading the nascent polyprotein to the ER membrane.</text>
</comment>
<comment type="subcellular location">
    <molecule>Mature core protein</molecule>
    <subcellularLocation>
        <location evidence="9">Virion</location>
    </subcellularLocation>
    <subcellularLocation>
        <location evidence="9">Host cytoplasm</location>
    </subcellularLocation>
    <subcellularLocation>
        <location evidence="1">Host nucleus</location>
    </subcellularLocation>
    <subcellularLocation>
        <location evidence="9">Host lipid droplet</location>
    </subcellularLocation>
    <text evidence="4">Only a minor proportion of core protein is present in the nucleus (By similarity). Probably present on the surface of lipid droplets (By similarity).</text>
</comment>
<comment type="subcellular location">
    <molecule>Envelope glycoprotein E1</molecule>
    <subcellularLocation>
        <location evidence="12">Virion membrane</location>
        <topology evidence="12">Single-pass type I membrane protein</topology>
    </subcellularLocation>
    <subcellularLocation>
        <location>Host endoplasmic reticulum membrane</location>
        <topology evidence="4">Single-pass type I membrane protein</topology>
    </subcellularLocation>
    <text evidence="4">The C-terminal transmembrane domain acts as a signal sequence and forms a hairpin structure before cleavage by host signal peptidase (By similarity). After cleavage, the membrane sequence is retained at the C-terminus of the protein, serving as ER membrane anchor (By similarity). A reorientation of the second hydrophobic stretch occurs after cleavage producing a single reoriented transmembrane domain (By similarity). These events explain the final topology of the protein (By similarity).</text>
</comment>
<comment type="subcellular location">
    <molecule>Envelope glycoprotein E2</molecule>
    <subcellularLocation>
        <location evidence="12">Virion membrane</location>
        <topology evidence="12">Single-pass type I membrane protein</topology>
    </subcellularLocation>
    <subcellularLocation>
        <location>Host endoplasmic reticulum membrane</location>
        <topology evidence="4">Single-pass type I membrane protein</topology>
    </subcellularLocation>
    <subcellularLocation>
        <location evidence="10">Host lipid droplet</location>
    </subcellularLocation>
    <text evidence="4">The C-terminal transmembrane domain acts as a signal sequence and forms a hairpin structure before cleavage by host signal peptidase (By similarity). After cleavage, the membrane sequence is retained at the C-terminus of the protein, serving as ER membrane anchor (By similarity). A reorientation of the second hydrophobic stretch occurs after cleavage producing a single reoriented transmembrane domain (By similarity). These events explain the final topology of the protein (By similarity).</text>
</comment>
<comment type="domain">
    <molecule>Envelope glycoprotein E1</molecule>
    <text evidence="4">The transmembrane regions of envelope E1 and E2 glycoproteins are involved in heterodimer formation, ER localization, and assembly of these proteins.</text>
</comment>
<comment type="domain">
    <molecule>Envelope glycoprotein E2</molecule>
    <text evidence="2 4">The transmembrane regions of envelope E1 and E2 glycoproteins are involved in heterodimer formation, ER localization, and assembly of these proteins (By similarity). Envelope E2 glycoprotein contain two highly variable regions called hypervariable region 1 and 2 (HVR1 and HVR2) (By similarity). E2 also contain two segments involved in CD81-binding (By similarity). HVR1 is implicated in the SCARB1-mediated cell entry and probably acts as a regulator of the association of particles with lipids (By similarity).</text>
</comment>
<comment type="PTM">
    <molecule>Genome polyprotein</molecule>
    <text evidence="3 4">Specific enzymatic cleavages in vivo yield mature proteins (By similarity). The structural proteins, core, E1, E2 and p7 are produced by proteolytic processing by host signal peptidases (By similarity). The core protein precursor is synthesized as a 23 kDa, which is retained in the ER membrane through the hydrophobic signal peptide (By similarity). Cleavage by the signal peptidase releases the 21 kDa mature core protein (By similarity). The cleavage of the core protein precursor occurs between aminoacids 176 and 188 but the exact cleavage site is not known (By similarity). Some degraded forms of the core protein appear as well during the course of infection (By similarity). The other proteins (p7, NS2, NS3, NS4A, NS4B, NS5A and NS5B) are cleaved by the viral proteases (By similarity). Autoprocessing between NS2 and NS3 is mediated by the NS2 cysteine protease catalytic domain and regulated by the NS3 N-terminal domain (By similarity).</text>
</comment>
<comment type="PTM">
    <molecule>Mature core protein</molecule>
    <text evidence="6">Phosphorylated by host PKC and PKA.</text>
</comment>
<comment type="PTM">
    <molecule>Mature core protein</molecule>
    <text evidence="7">Ubiquitinated; mediated by UBE3A and leading to core protein subsequent proteasomal degradation.</text>
</comment>
<comment type="PTM">
    <molecule>Envelope glycoprotein E1</molecule>
    <text evidence="4">Highly N-glycosylated.</text>
</comment>
<comment type="PTM">
    <molecule>Envelope glycoprotein E2</molecule>
    <text evidence="4">Highly N-glycosylated.</text>
</comment>
<comment type="miscellaneous">
    <text evidence="12">Viral particle assembly takes place at the surface of ER-derived membranes in close proximity to lipid droplets. NS2 associates with E1/E2 glycoproteins, NS3 and NS5A, which interacts with the viral RNA and core protein to promote genome encapsidation. The nucleocapsid buds at the ER membrane where E1/E2 glycoproteins are anchored and afterward associate with nascent lipid droplet to acquire APOE and APOC. Secretion of viral particles is probably regulated by viroporin p7.</text>
</comment>
<comment type="miscellaneous">
    <molecule>Mature core protein</molecule>
    <text evidence="1">Exerts viral interference on hepatitis B virus when HCV and HBV coinfect the same cell, by suppressing HBV gene expression, RNA encapsidation and budding.</text>
</comment>
<comment type="similarity">
    <text evidence="12">Belongs to the hepacivirus polyprotein family.</text>
</comment>
<comment type="caution">
    <text evidence="12">The core gene probably also codes for alternative reading frame proteins (ARFPs). Many functions depicted for the core protein might belong to the ARFPs.</text>
</comment>
<sequence>RNLGKVIDTLTCGFADLMGYIPLVGAPLGGAARALAHGVRVLEDGVNYATGNLPGCSFSLFLLALLSCLTVPASAYQVRNSTGLYHVTNDCPNSSIVYEAADAILHAPGCVPCVREGNASRCWVAMTPTVATRDGRLPTTQLRRHIDLLVGSATLCSALYVGDLCGSIFLVGQLFTFSPRRHWTTQGCNCSIYPGHITGHRMAWDMMMNWSPTTALVVAQLLRIPQAILDMIAGAHWGVLAGIAYFSMVGNWAKVLVVLLLFAGVDAETTVTGGSAAHGALGIASLFNQGARQNIQLINTNGSWHINSTALNCNDSLNTGW</sequence>